<proteinExistence type="inferred from homology"/>
<reference key="1">
    <citation type="journal article" date="2009" name="Genome Res.">
        <title>Comparative genomics of protoploid Saccharomycetaceae.</title>
        <authorList>
            <consortium name="The Genolevures Consortium"/>
            <person name="Souciet J.-L."/>
            <person name="Dujon B."/>
            <person name="Gaillardin C."/>
            <person name="Johnston M."/>
            <person name="Baret P.V."/>
            <person name="Cliften P."/>
            <person name="Sherman D.J."/>
            <person name="Weissenbach J."/>
            <person name="Westhof E."/>
            <person name="Wincker P."/>
            <person name="Jubin C."/>
            <person name="Poulain J."/>
            <person name="Barbe V."/>
            <person name="Segurens B."/>
            <person name="Artiguenave F."/>
            <person name="Anthouard V."/>
            <person name="Vacherie B."/>
            <person name="Val M.-E."/>
            <person name="Fulton R.S."/>
            <person name="Minx P."/>
            <person name="Wilson R."/>
            <person name="Durrens P."/>
            <person name="Jean G."/>
            <person name="Marck C."/>
            <person name="Martin T."/>
            <person name="Nikolski M."/>
            <person name="Rolland T."/>
            <person name="Seret M.-L."/>
            <person name="Casaregola S."/>
            <person name="Despons L."/>
            <person name="Fairhead C."/>
            <person name="Fischer G."/>
            <person name="Lafontaine I."/>
            <person name="Leh V."/>
            <person name="Lemaire M."/>
            <person name="de Montigny J."/>
            <person name="Neuveglise C."/>
            <person name="Thierry A."/>
            <person name="Blanc-Lenfle I."/>
            <person name="Bleykasten C."/>
            <person name="Diffels J."/>
            <person name="Fritsch E."/>
            <person name="Frangeul L."/>
            <person name="Goeffon A."/>
            <person name="Jauniaux N."/>
            <person name="Kachouri-Lafond R."/>
            <person name="Payen C."/>
            <person name="Potier S."/>
            <person name="Pribylova L."/>
            <person name="Ozanne C."/>
            <person name="Richard G.-F."/>
            <person name="Sacerdot C."/>
            <person name="Straub M.-L."/>
            <person name="Talla E."/>
        </authorList>
    </citation>
    <scope>NUCLEOTIDE SEQUENCE [LARGE SCALE GENOMIC DNA]</scope>
    <source>
        <strain>ATCC 2623 / CBS 732 / BCRC 21506 / NBRC 1130 / NCYC 568 / NRRL Y-229</strain>
    </source>
</reference>
<gene>
    <name type="primary">IRC6</name>
    <name type="ordered locus">ZYRO0E09152g</name>
</gene>
<name>IRC6_ZYGRC</name>
<dbReference type="EMBL" id="CU928181">
    <property type="protein sequence ID" value="CAR31070.1"/>
    <property type="molecule type" value="Genomic_DNA"/>
</dbReference>
<dbReference type="RefSeq" id="XP_002499325.1">
    <property type="nucleotide sequence ID" value="XM_002499280.1"/>
</dbReference>
<dbReference type="SMR" id="C5E4V9"/>
<dbReference type="FunCoup" id="C5E4V9">
    <property type="interactions" value="27"/>
</dbReference>
<dbReference type="STRING" id="559307.C5E4V9"/>
<dbReference type="GeneID" id="8204880"/>
<dbReference type="KEGG" id="zro:ZYRO0E09152g"/>
<dbReference type="HOGENOM" id="CLU_079666_0_0_1"/>
<dbReference type="InParanoid" id="C5E4V9"/>
<dbReference type="Proteomes" id="UP000008536">
    <property type="component" value="Chromosome E"/>
</dbReference>
<dbReference type="GO" id="GO:0030674">
    <property type="term" value="F:protein-macromolecule adaptor activity"/>
    <property type="evidence" value="ECO:0007669"/>
    <property type="project" value="TreeGrafter"/>
</dbReference>
<dbReference type="GO" id="GO:0016192">
    <property type="term" value="P:vesicle-mediated transport"/>
    <property type="evidence" value="ECO:0007669"/>
    <property type="project" value="InterPro"/>
</dbReference>
<dbReference type="Gene3D" id="3.40.50.11960">
    <property type="match status" value="1"/>
</dbReference>
<dbReference type="InterPro" id="IPR034627">
    <property type="entry name" value="Irc6"/>
</dbReference>
<dbReference type="PANTHER" id="PTHR28043">
    <property type="entry name" value="INCREASED RECOMBINATION CENTERS PROTEIN 6"/>
    <property type="match status" value="1"/>
</dbReference>
<dbReference type="PANTHER" id="PTHR28043:SF1">
    <property type="entry name" value="INCREASED RECOMBINATION CENTERS PROTEIN 6"/>
    <property type="match status" value="1"/>
</dbReference>
<protein>
    <recommendedName>
        <fullName>Increased recombination centers protein 6</fullName>
    </recommendedName>
</protein>
<evidence type="ECO:0000250" key="1"/>
<evidence type="ECO:0000305" key="2"/>
<organism>
    <name type="scientific">Zygosaccharomyces rouxii (strain ATCC 2623 / CBS 732 / NBRC 1130 / NCYC 568 / NRRL Y-229)</name>
    <dbReference type="NCBI Taxonomy" id="559307"/>
    <lineage>
        <taxon>Eukaryota</taxon>
        <taxon>Fungi</taxon>
        <taxon>Dikarya</taxon>
        <taxon>Ascomycota</taxon>
        <taxon>Saccharomycotina</taxon>
        <taxon>Saccharomycetes</taxon>
        <taxon>Saccharomycetales</taxon>
        <taxon>Saccharomycetaceae</taxon>
        <taxon>Zygosaccharomyces</taxon>
    </lineage>
</organism>
<accession>C5E4V9</accession>
<keyword id="KW-0160">Chromosomal rearrangement</keyword>
<keyword id="KW-1185">Reference proteome</keyword>
<feature type="chain" id="PRO_0000399231" description="Increased recombination centers protein 6">
    <location>
        <begin position="1"/>
        <end position="237"/>
    </location>
</feature>
<comment type="function">
    <text evidence="1">Involved in gross chromosomal rearrangements (GCRs) and telomere healing.</text>
</comment>
<comment type="similarity">
    <text evidence="2">Belongs to the IRC6 family.</text>
</comment>
<sequence>MIMDSVSSPEQPKNKILVTFGDGDSIHQRELISQLFGIDIGIGDRIVKGLVWKTKYYRVEFDLYIDDYNDFSSWFQEFASEEFAALREAMAGLVVVDQYEPTKPLNPLGLQDTFVVWVNTDSKVGQDQVDEINDKLFQTEESTVELVNLHSNEDTNEYGEKIGIPRFKEIVDTCSWKNCDMDYLTSTSSTTNPEVSLELIVQRMQHARLKHANSEMDNDEALQIAQEIAEELTGKED</sequence>